<reference evidence="9" key="1">
    <citation type="journal article" date="2018" name="J. Proteome Res.">
        <title>Deciphering the Molecular Diversity of an Ant Venom Peptidome through a Venomics Approach.</title>
        <authorList>
            <person name="Touchard A."/>
            <person name="Tene N."/>
            <person name="Song P.C.T."/>
            <person name="Lefranc B."/>
            <person name="Leprince J."/>
            <person name="Treilhou M."/>
            <person name="Bonnafe E."/>
        </authorList>
    </citation>
    <scope>NUCLEOTIDE SEQUENCE [MRNA]</scope>
    <scope>PROTEIN SEQUENCE OF 25-58</scope>
    <scope>SUBCELLULAR LOCATION</scope>
    <scope>MASS SPECTROMETRY</scope>
    <scope>DISULFIDE BOND</scope>
    <source>
        <tissue>Venom</tissue>
        <tissue>Venom gland</tissue>
    </source>
</reference>
<reference key="2">
    <citation type="journal article" date="2024" name="Membranes">
        <title>The helix ring peptide U11 from the venom of the ant, tetramorium bicarinatum, acts as a putative pore-forming toxin.</title>
        <authorList>
            <person name="Peigneur S."/>
            <person name="Tibery D."/>
            <person name="Tytgat J."/>
        </authorList>
    </citation>
    <scope>FUNCTION</scope>
    <scope>SYNTHESIS OF 25-58</scope>
</reference>
<reference evidence="10" key="3">
    <citation type="journal article" date="2023" name="Toxins">
        <title>Discovery of an insect neuroactive helix ring peptide from ant venom.</title>
        <authorList>
            <person name="Barasse V."/>
            <person name="Jouvensal L."/>
            <person name="Boy G."/>
            <person name="Billet A."/>
            <person name="Ascoet S."/>
            <person name="Lefranc B."/>
            <person name="Leprince J."/>
            <person name="Dejean A."/>
            <person name="Lacotte V."/>
            <person name="Rahioui I."/>
            <person name="Sivignon C."/>
            <person name="Gaget K."/>
            <person name="Ribeiro Lopes M."/>
            <person name="Calevro F."/>
            <person name="Da Silva P."/>
            <person name="Loth K."/>
            <person name="Paquet F."/>
            <person name="Treilhou M."/>
            <person name="Bonnafe E."/>
            <person name="Touchard A."/>
        </authorList>
    </citation>
    <scope>STRUCTURE BY NMR OF 25-58</scope>
    <scope>FUNCTION</scope>
    <scope>SYNTHESIS OF 25-58</scope>
    <scope>DISULFIDE BOND</scope>
    <scope>TOXIC DOSE</scope>
    <scope>BIOTECHNOLOGY</scope>
</reference>
<protein>
    <recommendedName>
        <fullName evidence="4 5">U11-myrmicitoxin-Tb1a</fullName>
        <shortName evidence="4 5">U11-MYRTX-Tb1a</shortName>
    </recommendedName>
</protein>
<comment type="function">
    <text evidence="2 3">Neurotoxin that causes irreversible rapid flaccid paralysis in blowflies and honeybees upon intrathoracic injection (PubMed:37888631). Causes a quick and irreversible cytolytic effect (at 10 uM) indicating it possibly acts as a pore-forming peptide (PubMed:38786948). Shows only weak effect on aphids (A.pisum) at high doses 24 hours post intrathoracic injection (PubMed:37888631). In vitro, is not cytotoxic on the dipteran S2 Drosophila embryonic cell line (PubMed:37888631).</text>
</comment>
<comment type="subcellular location">
    <subcellularLocation>
        <location evidence="1">Secreted</location>
    </subcellularLocation>
    <subcellularLocation>
        <location evidence="8">Target cell membrane</location>
    </subcellularLocation>
</comment>
<comment type="tissue specificity">
    <text evidence="7">Expressed by the venom gland.</text>
</comment>
<comment type="mass spectrometry"/>
<comment type="toxic dose">
    <text evidence="1">By intrathoracic injection into blowfly (L.caesar), PD(50) is 1.78 nmol/g one hour after injection, and PD(50) is 2.67 nmol/g 24 hours after injection.</text>
</comment>
<comment type="toxic dose">
    <text evidence="1">By intrathoracic injection into honeybee (A.mellifera), PD(50) is 1.36 nmol/g one hour after injection, and PD(50) is 1.11 nmol/g 24 hours after injection.</text>
</comment>
<comment type="biotechnology">
    <text evidence="2">Neurotoxin that could be considered for development as an insecticide, since ingestion at high doses is toxic to both Drosophila (D.melanogaster) and blowflies (L.caesar). It is not toxic by ingestion for bees, aphids and weevils (S.orizae).</text>
</comment>
<comment type="miscellaneous">
    <text evidence="3">Negative results: does not show effect on the activity of Kv1.1/KCNA1, Kv1.3/KCNA3, Kv1.4/KCNA4, Kv1.5/KCNA5, Shaker IR, Kv4.2/KCND2, Kv7.1/KCNQ1, Kv10.1/KCNH1, Kv11.1/KCNH2, C.elegans KQT-1 potassium channel, and sodium channels DmNav and BgNav.</text>
</comment>
<comment type="similarity">
    <text evidence="6">Belongs to the formicidae venom precursor-01 superfamily.</text>
</comment>
<name>TX11A_TETBN</name>
<accession>A0A6M3Z554</accession>
<sequence>LAMAMGDAVADAQARAMAAAYAIAGKEKEKLKQCFKDMTLAAIDYAKHKVEKHLFKCI</sequence>
<keyword id="KW-0002">3D-structure</keyword>
<keyword id="KW-0204">Cytolysis</keyword>
<keyword id="KW-0903">Direct protein sequencing</keyword>
<keyword id="KW-1015">Disulfide bond</keyword>
<keyword id="KW-0406">Ion transport</keyword>
<keyword id="KW-0472">Membrane</keyword>
<keyword id="KW-0528">Neurotoxin</keyword>
<keyword id="KW-0964">Secreted</keyword>
<keyword id="KW-1052">Target cell membrane</keyword>
<keyword id="KW-1053">Target membrane</keyword>
<keyword id="KW-0800">Toxin</keyword>
<keyword id="KW-0812">Transmembrane</keyword>
<keyword id="KW-0813">Transport</keyword>
<organism>
    <name type="scientific">Tetramorium bicarinatum</name>
    <name type="common">Tramp ant</name>
    <dbReference type="NCBI Taxonomy" id="219812"/>
    <lineage>
        <taxon>Eukaryota</taxon>
        <taxon>Metazoa</taxon>
        <taxon>Ecdysozoa</taxon>
        <taxon>Arthropoda</taxon>
        <taxon>Hexapoda</taxon>
        <taxon>Insecta</taxon>
        <taxon>Pterygota</taxon>
        <taxon>Neoptera</taxon>
        <taxon>Endopterygota</taxon>
        <taxon>Hymenoptera</taxon>
        <taxon>Apocrita</taxon>
        <taxon>Aculeata</taxon>
        <taxon>Formicoidea</taxon>
        <taxon>Formicidae</taxon>
        <taxon>Myrmicinae</taxon>
        <taxon>Tetramorium</taxon>
    </lineage>
</organism>
<dbReference type="EMBL" id="MN397943">
    <property type="protein sequence ID" value="QJP03490.1"/>
    <property type="molecule type" value="mRNA"/>
</dbReference>
<dbReference type="PDB" id="8PWT">
    <property type="method" value="NMR"/>
    <property type="chains" value="A=25-58"/>
</dbReference>
<dbReference type="PDBsum" id="8PWT"/>
<dbReference type="SMR" id="A0A6M3Z554"/>
<dbReference type="GO" id="GO:0005576">
    <property type="term" value="C:extracellular region"/>
    <property type="evidence" value="ECO:0000314"/>
    <property type="project" value="UniProtKB"/>
</dbReference>
<dbReference type="GO" id="GO:0015459">
    <property type="term" value="F:potassium channel regulator activity"/>
    <property type="evidence" value="ECO:0007669"/>
    <property type="project" value="UniProtKB-KW"/>
</dbReference>
<dbReference type="GO" id="GO:0090729">
    <property type="term" value="F:toxin activity"/>
    <property type="evidence" value="ECO:0007669"/>
    <property type="project" value="UniProtKB-KW"/>
</dbReference>
<evidence type="ECO:0000269" key="1">
    <source>
    </source>
</evidence>
<evidence type="ECO:0000269" key="2">
    <source>
    </source>
</evidence>
<evidence type="ECO:0000269" key="3">
    <source>
    </source>
</evidence>
<evidence type="ECO:0000303" key="4">
    <source>
    </source>
</evidence>
<evidence type="ECO:0000303" key="5">
    <source>
    </source>
</evidence>
<evidence type="ECO:0000305" key="6"/>
<evidence type="ECO:0000305" key="7">
    <source>
    </source>
</evidence>
<evidence type="ECO:0000305" key="8">
    <source>
    </source>
</evidence>
<evidence type="ECO:0000312" key="9">
    <source>
        <dbReference type="EMBL" id="QJP03490.1"/>
    </source>
</evidence>
<evidence type="ECO:0000312" key="10">
    <source>
        <dbReference type="PDB" id="8PWT"/>
    </source>
</evidence>
<evidence type="ECO:0007744" key="11">
    <source>
        <dbReference type="PDB" id="8PWT"/>
    </source>
</evidence>
<evidence type="ECO:0007829" key="12">
    <source>
        <dbReference type="PDB" id="8PWT"/>
    </source>
</evidence>
<proteinExistence type="evidence at protein level"/>
<feature type="propeptide" id="PRO_0000453043" evidence="7">
    <location>
        <begin position="1" status="less than"/>
        <end position="24"/>
    </location>
</feature>
<feature type="peptide" id="PRO_0000453044" description="U11-myrmicitoxin-Tb1a" evidence="1">
    <location>
        <begin position="25"/>
        <end position="58"/>
    </location>
</feature>
<feature type="disulfide bond" evidence="1 2 11">
    <location>
        <begin position="34"/>
        <end position="57"/>
    </location>
</feature>
<feature type="non-terminal residue" evidence="4">
    <location>
        <position position="1"/>
    </location>
</feature>
<feature type="strand" evidence="12">
    <location>
        <begin position="28"/>
        <end position="30"/>
    </location>
</feature>
<feature type="helix" evidence="12">
    <location>
        <begin position="31"/>
        <end position="33"/>
    </location>
</feature>
<feature type="turn" evidence="12">
    <location>
        <begin position="38"/>
        <end position="40"/>
    </location>
</feature>
<feature type="helix" evidence="12">
    <location>
        <begin position="41"/>
        <end position="48"/>
    </location>
</feature>
<feature type="helix" evidence="12">
    <location>
        <begin position="51"/>
        <end position="54"/>
    </location>
</feature>